<feature type="chain" id="PRO_0000169217" description="Uncharacterized protein YfeC">
    <location>
        <begin position="1"/>
        <end position="114"/>
    </location>
</feature>
<feature type="sequence conflict" description="In Ref. 1; AAA65718/CAA45394." evidence="1" ref="1">
    <original>RLVHVNEQVREYIRNAERPEGQGEAPALSGDAPLEVL</original>
    <variation>DWFTSMNRFVNIFAMLNVQKVREKRLPF</variation>
    <location>
        <begin position="40"/>
        <end position="76"/>
    </location>
</feature>
<keyword id="KW-1185">Reference proteome</keyword>
<evidence type="ECO:0000305" key="1"/>
<dbReference type="EMBL" id="M13687">
    <property type="protein sequence ID" value="AAA65718.1"/>
    <property type="molecule type" value="Genomic_DNA"/>
</dbReference>
<dbReference type="EMBL" id="X63976">
    <property type="protein sequence ID" value="CAA45394.1"/>
    <property type="molecule type" value="Genomic_DNA"/>
</dbReference>
<dbReference type="EMBL" id="U00096">
    <property type="protein sequence ID" value="AAC75455.2"/>
    <property type="molecule type" value="Genomic_DNA"/>
</dbReference>
<dbReference type="EMBL" id="AP009048">
    <property type="protein sequence ID" value="BAA16269.2"/>
    <property type="molecule type" value="Genomic_DNA"/>
</dbReference>
<dbReference type="RefSeq" id="NP_416897.2">
    <property type="nucleotide sequence ID" value="NC_000913.3"/>
</dbReference>
<dbReference type="SMR" id="P0AD37"/>
<dbReference type="BioGRID" id="4261192">
    <property type="interactions" value="4"/>
</dbReference>
<dbReference type="DIP" id="DIP-12012N"/>
<dbReference type="FunCoup" id="P0AD37">
    <property type="interactions" value="7"/>
</dbReference>
<dbReference type="STRING" id="511145.b2398"/>
<dbReference type="PaxDb" id="511145-b2398"/>
<dbReference type="EnsemblBacteria" id="AAC75455">
    <property type="protein sequence ID" value="AAC75455"/>
    <property type="gene ID" value="b2398"/>
</dbReference>
<dbReference type="GeneID" id="946857"/>
<dbReference type="KEGG" id="ecj:JW2393"/>
<dbReference type="KEGG" id="eco:b2398"/>
<dbReference type="KEGG" id="ecoc:C3026_13325"/>
<dbReference type="PATRIC" id="fig|511145.12.peg.2493"/>
<dbReference type="EchoBASE" id="EB1401"/>
<dbReference type="eggNOG" id="COG3415">
    <property type="taxonomic scope" value="Bacteria"/>
</dbReference>
<dbReference type="HOGENOM" id="CLU_168146_0_0_6"/>
<dbReference type="InParanoid" id="P0AD37"/>
<dbReference type="OMA" id="GIYSPHD"/>
<dbReference type="PhylomeDB" id="P0AD37"/>
<dbReference type="BioCyc" id="EcoCyc:EG11431-MONOMER"/>
<dbReference type="PRO" id="PR:P0AD37"/>
<dbReference type="Proteomes" id="UP000000625">
    <property type="component" value="Chromosome"/>
</dbReference>
<dbReference type="InterPro" id="IPR009061">
    <property type="entry name" value="DNA-bd_dom_put_sf"/>
</dbReference>
<dbReference type="InterPro" id="IPR010749">
    <property type="entry name" value="YfeC-like"/>
</dbReference>
<dbReference type="Pfam" id="PF07037">
    <property type="entry name" value="YfeC-like"/>
    <property type="match status" value="1"/>
</dbReference>
<dbReference type="SUPFAM" id="SSF46955">
    <property type="entry name" value="Putative DNA-binding domain"/>
    <property type="match status" value="1"/>
</dbReference>
<organism>
    <name type="scientific">Escherichia coli (strain K12)</name>
    <dbReference type="NCBI Taxonomy" id="83333"/>
    <lineage>
        <taxon>Bacteria</taxon>
        <taxon>Pseudomonadati</taxon>
        <taxon>Pseudomonadota</taxon>
        <taxon>Gammaproteobacteria</taxon>
        <taxon>Enterobacterales</taxon>
        <taxon>Enterobacteriaceae</taxon>
        <taxon>Escherichia</taxon>
    </lineage>
</organism>
<sequence length="114" mass="12720">MTPDELARLTGYSRQTINKWVRKEGWTTSPKPGVQGGKARLVHVNEQVREYIRNAERPEGQGEAPALSGDAPLEVLLVTLAKEMTPVEQKQFTSLLLREGIIGLLQRLGIRDSK</sequence>
<reference key="1">
    <citation type="journal article" date="1990" name="J. Mol. Biol.">
        <title>Precise mapping and comparison of two evolutionarily related regions of the Escherichia coli K-12 chromosome. Evolution of valU and lysT from an ancestral tRNA operon.</title>
        <authorList>
            <person name="Brun Y.V."/>
            <person name="Breton R."/>
            <person name="Lanouette P."/>
            <person name="Lapointe J."/>
        </authorList>
    </citation>
    <scope>NUCLEOTIDE SEQUENCE [GENOMIC DNA]</scope>
    <source>
        <strain>K12</strain>
    </source>
</reference>
<reference key="2">
    <citation type="journal article" date="1997" name="DNA Res.">
        <title>Construction of a contiguous 874-kb sequence of the Escherichia coli-K12 genome corresponding to 50.0-68.8 min on the linkage map and analysis of its sequence features.</title>
        <authorList>
            <person name="Yamamoto Y."/>
            <person name="Aiba H."/>
            <person name="Baba T."/>
            <person name="Hayashi K."/>
            <person name="Inada T."/>
            <person name="Isono K."/>
            <person name="Itoh T."/>
            <person name="Kimura S."/>
            <person name="Kitagawa M."/>
            <person name="Makino K."/>
            <person name="Miki T."/>
            <person name="Mitsuhashi N."/>
            <person name="Mizobuchi K."/>
            <person name="Mori H."/>
            <person name="Nakade S."/>
            <person name="Nakamura Y."/>
            <person name="Nashimoto H."/>
            <person name="Oshima T."/>
            <person name="Oyama S."/>
            <person name="Saito N."/>
            <person name="Sampei G."/>
            <person name="Satoh Y."/>
            <person name="Sivasundaram S."/>
            <person name="Tagami H."/>
            <person name="Takahashi H."/>
            <person name="Takeda J."/>
            <person name="Takemoto K."/>
            <person name="Uehara K."/>
            <person name="Wada C."/>
            <person name="Yamagata S."/>
            <person name="Horiuchi T."/>
        </authorList>
    </citation>
    <scope>NUCLEOTIDE SEQUENCE [LARGE SCALE GENOMIC DNA]</scope>
    <source>
        <strain>K12 / W3110 / ATCC 27325 / DSM 5911</strain>
    </source>
</reference>
<reference key="3">
    <citation type="journal article" date="1997" name="Science">
        <title>The complete genome sequence of Escherichia coli K-12.</title>
        <authorList>
            <person name="Blattner F.R."/>
            <person name="Plunkett G. III"/>
            <person name="Bloch C.A."/>
            <person name="Perna N.T."/>
            <person name="Burland V."/>
            <person name="Riley M."/>
            <person name="Collado-Vides J."/>
            <person name="Glasner J.D."/>
            <person name="Rode C.K."/>
            <person name="Mayhew G.F."/>
            <person name="Gregor J."/>
            <person name="Davis N.W."/>
            <person name="Kirkpatrick H.A."/>
            <person name="Goeden M.A."/>
            <person name="Rose D.J."/>
            <person name="Mau B."/>
            <person name="Shao Y."/>
        </authorList>
    </citation>
    <scope>NUCLEOTIDE SEQUENCE [LARGE SCALE GENOMIC DNA]</scope>
    <source>
        <strain>K12 / MG1655 / ATCC 47076</strain>
    </source>
</reference>
<reference key="4">
    <citation type="journal article" date="2006" name="Mol. Syst. Biol.">
        <title>Highly accurate genome sequences of Escherichia coli K-12 strains MG1655 and W3110.</title>
        <authorList>
            <person name="Hayashi K."/>
            <person name="Morooka N."/>
            <person name="Yamamoto Y."/>
            <person name="Fujita K."/>
            <person name="Isono K."/>
            <person name="Choi S."/>
            <person name="Ohtsubo E."/>
            <person name="Baba T."/>
            <person name="Wanner B.L."/>
            <person name="Mori H."/>
            <person name="Horiuchi T."/>
        </authorList>
    </citation>
    <scope>NUCLEOTIDE SEQUENCE [LARGE SCALE GENOMIC DNA]</scope>
    <source>
        <strain>K12 / W3110 / ATCC 27325 / DSM 5911</strain>
    </source>
</reference>
<protein>
    <recommendedName>
        <fullName>Uncharacterized protein YfeC</fullName>
    </recommendedName>
</protein>
<accession>P0AD37</accession>
<accession>P27239</accession>
<accession>P76530</accession>
<accession>P76956</accession>
<name>YFEC_ECOLI</name>
<gene>
    <name type="primary">yfeC</name>
    <name type="ordered locus">b2398</name>
    <name type="ordered locus">JW2393</name>
</gene>
<comment type="similarity">
    <text evidence="1">To E.coli YfiI and P.aeruginosa RluD.</text>
</comment>
<proteinExistence type="predicted"/>